<evidence type="ECO:0000255" key="1">
    <source>
        <dbReference type="HAMAP-Rule" id="MF_01323"/>
    </source>
</evidence>
<feature type="chain" id="PRO_0000277164" description="DNA-directed RNA polymerase subunit beta'">
    <location>
        <begin position="1"/>
        <end position="683"/>
    </location>
</feature>
<feature type="binding site" evidence="1">
    <location>
        <position position="69"/>
    </location>
    <ligand>
        <name>Zn(2+)</name>
        <dbReference type="ChEBI" id="CHEBI:29105"/>
    </ligand>
</feature>
<feature type="binding site" evidence="1">
    <location>
        <position position="71"/>
    </location>
    <ligand>
        <name>Zn(2+)</name>
        <dbReference type="ChEBI" id="CHEBI:29105"/>
    </ligand>
</feature>
<feature type="binding site" evidence="1">
    <location>
        <position position="87"/>
    </location>
    <ligand>
        <name>Zn(2+)</name>
        <dbReference type="ChEBI" id="CHEBI:29105"/>
    </ligand>
</feature>
<feature type="binding site" evidence="1">
    <location>
        <position position="90"/>
    </location>
    <ligand>
        <name>Zn(2+)</name>
        <dbReference type="ChEBI" id="CHEBI:29105"/>
    </ligand>
</feature>
<feature type="binding site" evidence="1">
    <location>
        <position position="492"/>
    </location>
    <ligand>
        <name>Mg(2+)</name>
        <dbReference type="ChEBI" id="CHEBI:18420"/>
    </ligand>
</feature>
<feature type="binding site" evidence="1">
    <location>
        <position position="494"/>
    </location>
    <ligand>
        <name>Mg(2+)</name>
        <dbReference type="ChEBI" id="CHEBI:18420"/>
    </ligand>
</feature>
<feature type="binding site" evidence="1">
    <location>
        <position position="496"/>
    </location>
    <ligand>
        <name>Mg(2+)</name>
        <dbReference type="ChEBI" id="CHEBI:18420"/>
    </ligand>
</feature>
<name>RPOC1_COFAR</name>
<geneLocation type="chloroplast"/>
<keyword id="KW-0150">Chloroplast</keyword>
<keyword id="KW-0240">DNA-directed RNA polymerase</keyword>
<keyword id="KW-0460">Magnesium</keyword>
<keyword id="KW-0479">Metal-binding</keyword>
<keyword id="KW-0548">Nucleotidyltransferase</keyword>
<keyword id="KW-0934">Plastid</keyword>
<keyword id="KW-1185">Reference proteome</keyword>
<keyword id="KW-0804">Transcription</keyword>
<keyword id="KW-0808">Transferase</keyword>
<keyword id="KW-0862">Zinc</keyword>
<sequence>MIDRYKHQQLRIGLVSPQQISAWATKILPNGEIVGEVTKPYTFHYKTNKPEKDGLFCERIFGPIKSGICACGNYRVIGDEKEDPKFCEQCGVQFVDSRIRRYQMGYIKLACPVTHVWYLKRLPSYIANLLDKSLKELEGLVYCDYLNFSFARPITKKPTFLRLRGSFKYEIQSWKYSIPLFFTTQGFDTFRNREISTGAVAIREQLADLDLRIILENSLVEWKELGEEGPTGNEWEDRKVGRRKDFLVRRMELTKHFIRTNIEPEWMVLFLLPVLPPELRPIIQIDGGKLMSSDINELYRRVIYRNNTLTDLLTTSRSTPGELVMCQEKLVQEAVDTLLDNGIRGQPMKDGHNKVYKSFSDVIEGKEGRFRETLLGKRVDYSGRSVIVVGPSLSLHRCGLPREIAIELFQTFVIRGLIRQHLASNIGVAKNKIREKEPIVWEILQEVMQGHPVLLNRAPTLHRLGIQAFQPVLVEGRAICLHPLVCKGFNADFDGDQMAVHVPLSLEAQAEARLLMFSHMNLLSPAIGDPISVPTQDMLMGLYVLTSGNRRGICVNRYNPWNRRNYQTKKSDNNNYEYTKEPFFCNSYDAIGAYRQKRINLDSPLWLRWPLDQRVIASREIPIEVHYESLGIYYEIYGHYLIVKSIKKEILFLYIRTTVGHISLYREIEEAIQGFSHACSYGT</sequence>
<reference key="1">
    <citation type="journal article" date="2007" name="Plant Biotechnol. J.">
        <title>The complete nucleotide sequence of the coffee (Coffea arabica L.) chloroplast genome: organization and implications for biotechnology and phylogenetic relationships amongst angiosperms.</title>
        <authorList>
            <person name="Samson N."/>
            <person name="Bausher M.G."/>
            <person name="Lee S.-B."/>
            <person name="Jansen R.K."/>
            <person name="Daniell H."/>
        </authorList>
    </citation>
    <scope>NUCLEOTIDE SEQUENCE [LARGE SCALE GENOMIC DNA]</scope>
</reference>
<dbReference type="EC" id="2.7.7.6" evidence="1"/>
<dbReference type="EMBL" id="EF044213">
    <property type="protein sequence ID" value="ABJ89670.1"/>
    <property type="molecule type" value="Genomic_DNA"/>
</dbReference>
<dbReference type="RefSeq" id="YP_817473.1">
    <property type="nucleotide sequence ID" value="NC_008535.1"/>
</dbReference>
<dbReference type="SMR" id="A0A326"/>
<dbReference type="GeneID" id="4421790"/>
<dbReference type="OrthoDB" id="1862828at2759"/>
<dbReference type="Proteomes" id="UP000515148">
    <property type="component" value="Chloroplast Pltd"/>
</dbReference>
<dbReference type="GO" id="GO:0009507">
    <property type="term" value="C:chloroplast"/>
    <property type="evidence" value="ECO:0007669"/>
    <property type="project" value="UniProtKB-SubCell"/>
</dbReference>
<dbReference type="GO" id="GO:0000428">
    <property type="term" value="C:DNA-directed RNA polymerase complex"/>
    <property type="evidence" value="ECO:0007669"/>
    <property type="project" value="UniProtKB-KW"/>
</dbReference>
<dbReference type="GO" id="GO:0005739">
    <property type="term" value="C:mitochondrion"/>
    <property type="evidence" value="ECO:0007669"/>
    <property type="project" value="GOC"/>
</dbReference>
<dbReference type="GO" id="GO:0003677">
    <property type="term" value="F:DNA binding"/>
    <property type="evidence" value="ECO:0007669"/>
    <property type="project" value="UniProtKB-UniRule"/>
</dbReference>
<dbReference type="GO" id="GO:0003899">
    <property type="term" value="F:DNA-directed RNA polymerase activity"/>
    <property type="evidence" value="ECO:0007669"/>
    <property type="project" value="UniProtKB-UniRule"/>
</dbReference>
<dbReference type="GO" id="GO:0000287">
    <property type="term" value="F:magnesium ion binding"/>
    <property type="evidence" value="ECO:0007669"/>
    <property type="project" value="UniProtKB-UniRule"/>
</dbReference>
<dbReference type="GO" id="GO:0008270">
    <property type="term" value="F:zinc ion binding"/>
    <property type="evidence" value="ECO:0007669"/>
    <property type="project" value="UniProtKB-UniRule"/>
</dbReference>
<dbReference type="GO" id="GO:0006351">
    <property type="term" value="P:DNA-templated transcription"/>
    <property type="evidence" value="ECO:0007669"/>
    <property type="project" value="UniProtKB-UniRule"/>
</dbReference>
<dbReference type="FunFam" id="1.10.40.90:FF:000002">
    <property type="entry name" value="DNA-directed RNA polymerase subunit"/>
    <property type="match status" value="1"/>
</dbReference>
<dbReference type="FunFam" id="4.10.860.120:FF:000007">
    <property type="entry name" value="DNA-directed RNA polymerase subunit gamma"/>
    <property type="match status" value="1"/>
</dbReference>
<dbReference type="Gene3D" id="1.10.40.90">
    <property type="match status" value="1"/>
</dbReference>
<dbReference type="Gene3D" id="2.40.40.20">
    <property type="match status" value="1"/>
</dbReference>
<dbReference type="Gene3D" id="4.10.860.120">
    <property type="entry name" value="RNA polymerase II, clamp domain"/>
    <property type="match status" value="1"/>
</dbReference>
<dbReference type="Gene3D" id="1.10.274.100">
    <property type="entry name" value="RNA polymerase Rpb1, domain 3"/>
    <property type="match status" value="1"/>
</dbReference>
<dbReference type="HAMAP" id="MF_01323">
    <property type="entry name" value="RNApol_bact_RpoC1"/>
    <property type="match status" value="1"/>
</dbReference>
<dbReference type="InterPro" id="IPR045867">
    <property type="entry name" value="DNA-dir_RpoC_beta_prime"/>
</dbReference>
<dbReference type="InterPro" id="IPR000722">
    <property type="entry name" value="RNA_pol_asu"/>
</dbReference>
<dbReference type="InterPro" id="IPR006592">
    <property type="entry name" value="RNA_pol_N"/>
</dbReference>
<dbReference type="InterPro" id="IPR007080">
    <property type="entry name" value="RNA_pol_Rpb1_1"/>
</dbReference>
<dbReference type="InterPro" id="IPR042102">
    <property type="entry name" value="RNA_pol_Rpb1_3_sf"/>
</dbReference>
<dbReference type="InterPro" id="IPR044893">
    <property type="entry name" value="RNA_pol_Rpb1_clamp_domain"/>
</dbReference>
<dbReference type="InterPro" id="IPR034678">
    <property type="entry name" value="RNApol_RpoC1"/>
</dbReference>
<dbReference type="PANTHER" id="PTHR19376">
    <property type="entry name" value="DNA-DIRECTED RNA POLYMERASE"/>
    <property type="match status" value="1"/>
</dbReference>
<dbReference type="PANTHER" id="PTHR19376:SF54">
    <property type="entry name" value="DNA-DIRECTED RNA POLYMERASE SUBUNIT BETA"/>
    <property type="match status" value="1"/>
</dbReference>
<dbReference type="Pfam" id="PF04997">
    <property type="entry name" value="RNA_pol_Rpb1_1"/>
    <property type="match status" value="1"/>
</dbReference>
<dbReference type="Pfam" id="PF00623">
    <property type="entry name" value="RNA_pol_Rpb1_2"/>
    <property type="match status" value="2"/>
</dbReference>
<dbReference type="SMART" id="SM00663">
    <property type="entry name" value="RPOLA_N"/>
    <property type="match status" value="1"/>
</dbReference>
<dbReference type="SUPFAM" id="SSF64484">
    <property type="entry name" value="beta and beta-prime subunits of DNA dependent RNA-polymerase"/>
    <property type="match status" value="1"/>
</dbReference>
<proteinExistence type="inferred from homology"/>
<protein>
    <recommendedName>
        <fullName evidence="1">DNA-directed RNA polymerase subunit beta'</fullName>
        <ecNumber evidence="1">2.7.7.6</ecNumber>
    </recommendedName>
    <alternativeName>
        <fullName evidence="1">PEP</fullName>
    </alternativeName>
    <alternativeName>
        <fullName evidence="1">Plastid-encoded RNA polymerase subunit beta'</fullName>
        <shortName evidence="1">RNA polymerase subunit beta'</shortName>
    </alternativeName>
</protein>
<gene>
    <name evidence="1" type="primary">rpoC1</name>
</gene>
<organism>
    <name type="scientific">Coffea arabica</name>
    <name type="common">Arabian coffee</name>
    <dbReference type="NCBI Taxonomy" id="13443"/>
    <lineage>
        <taxon>Eukaryota</taxon>
        <taxon>Viridiplantae</taxon>
        <taxon>Streptophyta</taxon>
        <taxon>Embryophyta</taxon>
        <taxon>Tracheophyta</taxon>
        <taxon>Spermatophyta</taxon>
        <taxon>Magnoliopsida</taxon>
        <taxon>eudicotyledons</taxon>
        <taxon>Gunneridae</taxon>
        <taxon>Pentapetalae</taxon>
        <taxon>asterids</taxon>
        <taxon>lamiids</taxon>
        <taxon>Gentianales</taxon>
        <taxon>Rubiaceae</taxon>
        <taxon>Ixoroideae</taxon>
        <taxon>Gardenieae complex</taxon>
        <taxon>Bertiereae - Coffeeae clade</taxon>
        <taxon>Coffeeae</taxon>
        <taxon>Coffea</taxon>
    </lineage>
</organism>
<accession>A0A326</accession>
<comment type="function">
    <text evidence="1">DNA-dependent RNA polymerase catalyzes the transcription of DNA into RNA using the four ribonucleoside triphosphates as substrates.</text>
</comment>
<comment type="catalytic activity">
    <reaction evidence="1">
        <text>RNA(n) + a ribonucleoside 5'-triphosphate = RNA(n+1) + diphosphate</text>
        <dbReference type="Rhea" id="RHEA:21248"/>
        <dbReference type="Rhea" id="RHEA-COMP:14527"/>
        <dbReference type="Rhea" id="RHEA-COMP:17342"/>
        <dbReference type="ChEBI" id="CHEBI:33019"/>
        <dbReference type="ChEBI" id="CHEBI:61557"/>
        <dbReference type="ChEBI" id="CHEBI:140395"/>
        <dbReference type="EC" id="2.7.7.6"/>
    </reaction>
</comment>
<comment type="cofactor">
    <cofactor evidence="1">
        <name>Mg(2+)</name>
        <dbReference type="ChEBI" id="CHEBI:18420"/>
    </cofactor>
    <text evidence="1">Binds 1 Mg(2+) ion per subunit.</text>
</comment>
<comment type="cofactor">
    <cofactor evidence="1">
        <name>Zn(2+)</name>
        <dbReference type="ChEBI" id="CHEBI:29105"/>
    </cofactor>
    <text evidence="1">Binds 1 Zn(2+) ion per subunit.</text>
</comment>
<comment type="subunit">
    <text evidence="1">In plastids the minimal PEP RNA polymerase catalytic core is composed of four subunits: alpha, beta, beta', and beta''. When a (nuclear-encoded) sigma factor is associated with the core the holoenzyme is formed, which can initiate transcription.</text>
</comment>
<comment type="subcellular location">
    <subcellularLocation>
        <location evidence="1">Plastid</location>
        <location evidence="1">Chloroplast</location>
    </subcellularLocation>
</comment>
<comment type="similarity">
    <text evidence="1">Belongs to the RNA polymerase beta' chain family. RpoC1 subfamily.</text>
</comment>